<comment type="function">
    <text evidence="1">Required for nucleoid occlusion (NO) phenomenon, which prevents Z-ring formation and cell division over the nucleoid. Acts as a DNA-associated cell division inhibitor that binds simultaneously chromosomal DNA and FtsZ, and disrupts the assembly of FtsZ polymers. SlmA-DNA-binding sequences (SBS) are dispersed on non-Ter regions of the chromosome, preventing FtsZ polymerization at these regions.</text>
</comment>
<comment type="subunit">
    <text evidence="1">Homodimer. Interacts with FtsZ.</text>
</comment>
<comment type="subcellular location">
    <subcellularLocation>
        <location evidence="1">Cytoplasm</location>
        <location evidence="1">Nucleoid</location>
    </subcellularLocation>
</comment>
<comment type="similarity">
    <text evidence="1">Belongs to the nucleoid occlusion factor SlmA family.</text>
</comment>
<evidence type="ECO:0000255" key="1">
    <source>
        <dbReference type="HAMAP-Rule" id="MF_01839"/>
    </source>
</evidence>
<accession>C5B9D1</accession>
<feature type="chain" id="PRO_1000216092" description="Nucleoid occlusion factor SlmA">
    <location>
        <begin position="1"/>
        <end position="198"/>
    </location>
</feature>
<feature type="domain" description="HTH tetR-type" evidence="1">
    <location>
        <begin position="9"/>
        <end position="70"/>
    </location>
</feature>
<feature type="DNA-binding region" description="H-T-H motif" evidence="1">
    <location>
        <begin position="33"/>
        <end position="52"/>
    </location>
</feature>
<feature type="coiled-coil region" evidence="1">
    <location>
        <begin position="117"/>
        <end position="144"/>
    </location>
</feature>
<reference key="1">
    <citation type="submission" date="2009-03" db="EMBL/GenBank/DDBJ databases">
        <title>Complete genome sequence of Edwardsiella ictaluri 93-146.</title>
        <authorList>
            <person name="Williams M.L."/>
            <person name="Gillaspy A.F."/>
            <person name="Dyer D.W."/>
            <person name="Thune R.L."/>
            <person name="Waldbieser G.C."/>
            <person name="Schuster S.C."/>
            <person name="Gipson J."/>
            <person name="Zaitshik J."/>
            <person name="Landry C."/>
            <person name="Lawrence M.L."/>
        </authorList>
    </citation>
    <scope>NUCLEOTIDE SEQUENCE [LARGE SCALE GENOMIC DNA]</scope>
    <source>
        <strain>93-146</strain>
    </source>
</reference>
<organism>
    <name type="scientific">Edwardsiella ictaluri (strain 93-146)</name>
    <dbReference type="NCBI Taxonomy" id="634503"/>
    <lineage>
        <taxon>Bacteria</taxon>
        <taxon>Pseudomonadati</taxon>
        <taxon>Pseudomonadota</taxon>
        <taxon>Gammaproteobacteria</taxon>
        <taxon>Enterobacterales</taxon>
        <taxon>Hafniaceae</taxon>
        <taxon>Edwardsiella</taxon>
    </lineage>
</organism>
<proteinExistence type="inferred from homology"/>
<gene>
    <name evidence="1" type="primary">slmA</name>
    <name type="ordered locus">NT01EI_0051</name>
</gene>
<name>SLMA_EDWI9</name>
<protein>
    <recommendedName>
        <fullName evidence="1">Nucleoid occlusion factor SlmA</fullName>
    </recommendedName>
</protein>
<sequence>MAEKENTKRNRREEILQALAQMLESSDGSQRITTAKLAANVGVSEAALYRHFPSKTRMFDSLIEFIEDTLTSRINLILQDEKDTFHRLRLILLLILGFAERNPGLTRIMTGHALMFEQDRLQGRINQLFERIEAQLRQVLKERRLREGSGFDHDETLLASQLLAFCEGMLSRFVRSEFRYRPTQEFETRWPLLACQLQ</sequence>
<keyword id="KW-0131">Cell cycle</keyword>
<keyword id="KW-0132">Cell division</keyword>
<keyword id="KW-0175">Coiled coil</keyword>
<keyword id="KW-0963">Cytoplasm</keyword>
<keyword id="KW-0238">DNA-binding</keyword>
<dbReference type="EMBL" id="CP001600">
    <property type="protein sequence ID" value="ACR67311.1"/>
    <property type="molecule type" value="Genomic_DNA"/>
</dbReference>
<dbReference type="RefSeq" id="WP_015869535.1">
    <property type="nucleotide sequence ID" value="NZ_CP169062.1"/>
</dbReference>
<dbReference type="SMR" id="C5B9D1"/>
<dbReference type="STRING" id="67780.B6E78_11415"/>
<dbReference type="GeneID" id="69537161"/>
<dbReference type="KEGG" id="eic:NT01EI_0051"/>
<dbReference type="PATRIC" id="fig|634503.3.peg.44"/>
<dbReference type="HOGENOM" id="CLU_069356_5_0_6"/>
<dbReference type="OrthoDB" id="9179041at2"/>
<dbReference type="Proteomes" id="UP000001485">
    <property type="component" value="Chromosome"/>
</dbReference>
<dbReference type="GO" id="GO:0043590">
    <property type="term" value="C:bacterial nucleoid"/>
    <property type="evidence" value="ECO:0007669"/>
    <property type="project" value="UniProtKB-UniRule"/>
</dbReference>
<dbReference type="GO" id="GO:0005737">
    <property type="term" value="C:cytoplasm"/>
    <property type="evidence" value="ECO:0007669"/>
    <property type="project" value="UniProtKB-UniRule"/>
</dbReference>
<dbReference type="GO" id="GO:0003700">
    <property type="term" value="F:DNA-binding transcription factor activity"/>
    <property type="evidence" value="ECO:0007669"/>
    <property type="project" value="TreeGrafter"/>
</dbReference>
<dbReference type="GO" id="GO:0000976">
    <property type="term" value="F:transcription cis-regulatory region binding"/>
    <property type="evidence" value="ECO:0007669"/>
    <property type="project" value="TreeGrafter"/>
</dbReference>
<dbReference type="GO" id="GO:0051301">
    <property type="term" value="P:cell division"/>
    <property type="evidence" value="ECO:0007669"/>
    <property type="project" value="UniProtKB-KW"/>
</dbReference>
<dbReference type="GO" id="GO:0010974">
    <property type="term" value="P:negative regulation of division septum assembly"/>
    <property type="evidence" value="ECO:0007669"/>
    <property type="project" value="InterPro"/>
</dbReference>
<dbReference type="FunFam" id="1.10.357.10:FF:000002">
    <property type="entry name" value="Nucleoid occlusion factor SlmA"/>
    <property type="match status" value="1"/>
</dbReference>
<dbReference type="Gene3D" id="1.10.357.10">
    <property type="entry name" value="Tetracycline Repressor, domain 2"/>
    <property type="match status" value="1"/>
</dbReference>
<dbReference type="HAMAP" id="MF_01839">
    <property type="entry name" value="NO_factor_SlmA"/>
    <property type="match status" value="1"/>
</dbReference>
<dbReference type="InterPro" id="IPR023772">
    <property type="entry name" value="DNA-bd_HTH_TetR-type_CS"/>
</dbReference>
<dbReference type="InterPro" id="IPR009057">
    <property type="entry name" value="Homeodomain-like_sf"/>
</dbReference>
<dbReference type="InterPro" id="IPR050109">
    <property type="entry name" value="HTH-type_TetR-like_transc_reg"/>
</dbReference>
<dbReference type="InterPro" id="IPR001647">
    <property type="entry name" value="HTH_TetR"/>
</dbReference>
<dbReference type="InterPro" id="IPR023769">
    <property type="entry name" value="NO_SlmA"/>
</dbReference>
<dbReference type="InterPro" id="IPR054580">
    <property type="entry name" value="SlmA-like_C"/>
</dbReference>
<dbReference type="InterPro" id="IPR036271">
    <property type="entry name" value="Tet_transcr_reg_TetR-rel_C_sf"/>
</dbReference>
<dbReference type="NCBIfam" id="NF007015">
    <property type="entry name" value="PRK09480.1"/>
    <property type="match status" value="1"/>
</dbReference>
<dbReference type="PANTHER" id="PTHR30055">
    <property type="entry name" value="HTH-TYPE TRANSCRIPTIONAL REGULATOR RUTR"/>
    <property type="match status" value="1"/>
</dbReference>
<dbReference type="PANTHER" id="PTHR30055:SF183">
    <property type="entry name" value="NUCLEOID OCCLUSION FACTOR SLMA"/>
    <property type="match status" value="1"/>
</dbReference>
<dbReference type="Pfam" id="PF22276">
    <property type="entry name" value="SlmA-like_C"/>
    <property type="match status" value="1"/>
</dbReference>
<dbReference type="Pfam" id="PF00440">
    <property type="entry name" value="TetR_N"/>
    <property type="match status" value="1"/>
</dbReference>
<dbReference type="SUPFAM" id="SSF46689">
    <property type="entry name" value="Homeodomain-like"/>
    <property type="match status" value="1"/>
</dbReference>
<dbReference type="SUPFAM" id="SSF48498">
    <property type="entry name" value="Tetracyclin repressor-like, C-terminal domain"/>
    <property type="match status" value="1"/>
</dbReference>
<dbReference type="PROSITE" id="PS01081">
    <property type="entry name" value="HTH_TETR_1"/>
    <property type="match status" value="1"/>
</dbReference>
<dbReference type="PROSITE" id="PS50977">
    <property type="entry name" value="HTH_TETR_2"/>
    <property type="match status" value="1"/>
</dbReference>